<organismHost>
    <name type="scientific">Gallus gallus</name>
    <name type="common">Chicken</name>
    <dbReference type="NCBI Taxonomy" id="9031"/>
</organismHost>
<proteinExistence type="predicted"/>
<evidence type="ECO:0000256" key="1">
    <source>
        <dbReference type="SAM" id="MobiDB-lite"/>
    </source>
</evidence>
<reference key="1">
    <citation type="journal article" date="1992" name="Virus Genes">
        <title>Sequence determination and genetic content of an 8.9-kb restriction fragment in the short unique region and the internal inverted repeat of Marek's disease virus type 1 DNA.</title>
        <authorList>
            <person name="Sakaguchi M."/>
            <person name="Urakawa T."/>
            <person name="Hirayama Y."/>
            <person name="Miki N."/>
            <person name="Yamamoto M."/>
            <person name="Hirai K."/>
        </authorList>
    </citation>
    <scope>NUCLEOTIDE SEQUENCE [GENOMIC DNA]</scope>
</reference>
<organism>
    <name type="scientific">Gallid herpesvirus 2 (strain GA)</name>
    <name type="common">GaHV-2</name>
    <name type="synonym">Marek's disease herpesvirus type 1</name>
    <dbReference type="NCBI Taxonomy" id="10388"/>
    <lineage>
        <taxon>Viruses</taxon>
        <taxon>Duplodnaviria</taxon>
        <taxon>Heunggongvirae</taxon>
        <taxon>Peploviricota</taxon>
        <taxon>Herviviricetes</taxon>
        <taxon>Herpesvirales</taxon>
        <taxon>Orthoherpesviridae</taxon>
        <taxon>Alphaherpesvirinae</taxon>
        <taxon>Mardivirus</taxon>
        <taxon>Mardivirus gallidalpha2</taxon>
        <taxon>Gallid alphaherpesvirus 2</taxon>
    </lineage>
</organism>
<name>US420_GAHVG</name>
<accession>Q05103</accession>
<dbReference type="EMBL" id="M80595">
    <property type="protein sequence ID" value="AAB59889.1"/>
    <property type="molecule type" value="Genomic_DNA"/>
</dbReference>
<dbReference type="InterPro" id="IPR003360">
    <property type="entry name" value="US22-like"/>
</dbReference>
<dbReference type="Pfam" id="PF02393">
    <property type="entry name" value="US22"/>
    <property type="match status" value="1"/>
</dbReference>
<protein>
    <recommendedName>
        <fullName>Uncharacterized 15.5 kDa protein</fullName>
    </recommendedName>
</protein>
<feature type="chain" id="PRO_0000116351" description="Uncharacterized 15.5 kDa protein">
    <location>
        <begin position="1"/>
        <end position="140"/>
    </location>
</feature>
<feature type="region of interest" description="Disordered" evidence="1">
    <location>
        <begin position="1"/>
        <end position="34"/>
    </location>
</feature>
<feature type="compositionally biased region" description="Basic and acidic residues" evidence="1">
    <location>
        <begin position="1"/>
        <end position="15"/>
    </location>
</feature>
<sequence length="140" mass="15496">MQRQTGHMEDKKRTGLESQGTENAFSDGRDGKDGLLHEGINEPILIPSTIADLEGIRELVRKFRGRLLPFEKCPDFCLRIGGLEASFHKGQEELLEYCEALYLPQPVKMEIVGIVDDVPCLATGMQLLILVAEGGRGICL</sequence>
<gene>
    <name type="primary">US420</name>
</gene>